<comment type="function">
    <text evidence="1">Cell wall formation.</text>
</comment>
<comment type="catalytic activity">
    <reaction evidence="1">
        <text>UDP-N-acetyl-alpha-D-muramate + L-alanine + ATP = UDP-N-acetyl-alpha-D-muramoyl-L-alanine + ADP + phosphate + H(+)</text>
        <dbReference type="Rhea" id="RHEA:23372"/>
        <dbReference type="ChEBI" id="CHEBI:15378"/>
        <dbReference type="ChEBI" id="CHEBI:30616"/>
        <dbReference type="ChEBI" id="CHEBI:43474"/>
        <dbReference type="ChEBI" id="CHEBI:57972"/>
        <dbReference type="ChEBI" id="CHEBI:70757"/>
        <dbReference type="ChEBI" id="CHEBI:83898"/>
        <dbReference type="ChEBI" id="CHEBI:456216"/>
        <dbReference type="EC" id="6.3.2.8"/>
    </reaction>
</comment>
<comment type="pathway">
    <text evidence="1">Cell wall biogenesis; peptidoglycan biosynthesis.</text>
</comment>
<comment type="subcellular location">
    <subcellularLocation>
        <location evidence="1">Cytoplasm</location>
    </subcellularLocation>
</comment>
<comment type="similarity">
    <text evidence="1">Belongs to the MurCDEF family.</text>
</comment>
<protein>
    <recommendedName>
        <fullName evidence="1">UDP-N-acetylmuramate--L-alanine ligase</fullName>
        <ecNumber evidence="1">6.3.2.8</ecNumber>
    </recommendedName>
    <alternativeName>
        <fullName evidence="1">UDP-N-acetylmuramoyl-L-alanine synthetase</fullName>
    </alternativeName>
</protein>
<feature type="chain" id="PRO_1000074728" description="UDP-N-acetylmuramate--L-alanine ligase">
    <location>
        <begin position="1"/>
        <end position="476"/>
    </location>
</feature>
<feature type="binding site" evidence="1">
    <location>
        <begin position="125"/>
        <end position="131"/>
    </location>
    <ligand>
        <name>ATP</name>
        <dbReference type="ChEBI" id="CHEBI:30616"/>
    </ligand>
</feature>
<gene>
    <name evidence="1" type="primary">murC</name>
    <name type="ordered locus">Asuc_1931</name>
</gene>
<keyword id="KW-0067">ATP-binding</keyword>
<keyword id="KW-0131">Cell cycle</keyword>
<keyword id="KW-0132">Cell division</keyword>
<keyword id="KW-0133">Cell shape</keyword>
<keyword id="KW-0961">Cell wall biogenesis/degradation</keyword>
<keyword id="KW-0963">Cytoplasm</keyword>
<keyword id="KW-0436">Ligase</keyword>
<keyword id="KW-0547">Nucleotide-binding</keyword>
<keyword id="KW-0573">Peptidoglycan synthesis</keyword>
<keyword id="KW-1185">Reference proteome</keyword>
<accession>A6VQN2</accession>
<name>MURC_ACTSZ</name>
<organism>
    <name type="scientific">Actinobacillus succinogenes (strain ATCC 55618 / DSM 22257 / CCUG 43843 / 130Z)</name>
    <dbReference type="NCBI Taxonomy" id="339671"/>
    <lineage>
        <taxon>Bacteria</taxon>
        <taxon>Pseudomonadati</taxon>
        <taxon>Pseudomonadota</taxon>
        <taxon>Gammaproteobacteria</taxon>
        <taxon>Pasteurellales</taxon>
        <taxon>Pasteurellaceae</taxon>
        <taxon>Actinobacillus</taxon>
    </lineage>
</organism>
<dbReference type="EC" id="6.3.2.8" evidence="1"/>
<dbReference type="EMBL" id="CP000746">
    <property type="protein sequence ID" value="ABR75279.1"/>
    <property type="molecule type" value="Genomic_DNA"/>
</dbReference>
<dbReference type="RefSeq" id="WP_012073656.1">
    <property type="nucleotide sequence ID" value="NC_009655.1"/>
</dbReference>
<dbReference type="SMR" id="A6VQN2"/>
<dbReference type="STRING" id="339671.Asuc_1931"/>
<dbReference type="KEGG" id="asu:Asuc_1931"/>
<dbReference type="eggNOG" id="COG0773">
    <property type="taxonomic scope" value="Bacteria"/>
</dbReference>
<dbReference type="HOGENOM" id="CLU_028104_2_2_6"/>
<dbReference type="OrthoDB" id="9804126at2"/>
<dbReference type="UniPathway" id="UPA00219"/>
<dbReference type="Proteomes" id="UP000001114">
    <property type="component" value="Chromosome"/>
</dbReference>
<dbReference type="GO" id="GO:0005737">
    <property type="term" value="C:cytoplasm"/>
    <property type="evidence" value="ECO:0007669"/>
    <property type="project" value="UniProtKB-SubCell"/>
</dbReference>
<dbReference type="GO" id="GO:0005524">
    <property type="term" value="F:ATP binding"/>
    <property type="evidence" value="ECO:0007669"/>
    <property type="project" value="UniProtKB-UniRule"/>
</dbReference>
<dbReference type="GO" id="GO:0008763">
    <property type="term" value="F:UDP-N-acetylmuramate-L-alanine ligase activity"/>
    <property type="evidence" value="ECO:0007669"/>
    <property type="project" value="UniProtKB-UniRule"/>
</dbReference>
<dbReference type="GO" id="GO:0051301">
    <property type="term" value="P:cell division"/>
    <property type="evidence" value="ECO:0007669"/>
    <property type="project" value="UniProtKB-KW"/>
</dbReference>
<dbReference type="GO" id="GO:0071555">
    <property type="term" value="P:cell wall organization"/>
    <property type="evidence" value="ECO:0007669"/>
    <property type="project" value="UniProtKB-KW"/>
</dbReference>
<dbReference type="GO" id="GO:0009252">
    <property type="term" value="P:peptidoglycan biosynthetic process"/>
    <property type="evidence" value="ECO:0007669"/>
    <property type="project" value="UniProtKB-UniRule"/>
</dbReference>
<dbReference type="GO" id="GO:0008360">
    <property type="term" value="P:regulation of cell shape"/>
    <property type="evidence" value="ECO:0007669"/>
    <property type="project" value="UniProtKB-KW"/>
</dbReference>
<dbReference type="FunFam" id="3.40.1190.10:FF:000001">
    <property type="entry name" value="UDP-N-acetylmuramate--L-alanine ligase"/>
    <property type="match status" value="1"/>
</dbReference>
<dbReference type="FunFam" id="3.40.50.720:FF:000046">
    <property type="entry name" value="UDP-N-acetylmuramate--L-alanine ligase"/>
    <property type="match status" value="1"/>
</dbReference>
<dbReference type="Gene3D" id="3.90.190.20">
    <property type="entry name" value="Mur ligase, C-terminal domain"/>
    <property type="match status" value="1"/>
</dbReference>
<dbReference type="Gene3D" id="3.40.1190.10">
    <property type="entry name" value="Mur-like, catalytic domain"/>
    <property type="match status" value="1"/>
</dbReference>
<dbReference type="Gene3D" id="3.40.50.720">
    <property type="entry name" value="NAD(P)-binding Rossmann-like Domain"/>
    <property type="match status" value="1"/>
</dbReference>
<dbReference type="HAMAP" id="MF_00046">
    <property type="entry name" value="MurC"/>
    <property type="match status" value="1"/>
</dbReference>
<dbReference type="InterPro" id="IPR036565">
    <property type="entry name" value="Mur-like_cat_sf"/>
</dbReference>
<dbReference type="InterPro" id="IPR004101">
    <property type="entry name" value="Mur_ligase_C"/>
</dbReference>
<dbReference type="InterPro" id="IPR036615">
    <property type="entry name" value="Mur_ligase_C_dom_sf"/>
</dbReference>
<dbReference type="InterPro" id="IPR013221">
    <property type="entry name" value="Mur_ligase_cen"/>
</dbReference>
<dbReference type="InterPro" id="IPR000713">
    <property type="entry name" value="Mur_ligase_N"/>
</dbReference>
<dbReference type="InterPro" id="IPR050061">
    <property type="entry name" value="MurCDEF_pg_biosynth"/>
</dbReference>
<dbReference type="InterPro" id="IPR005758">
    <property type="entry name" value="UDP-N-AcMur_Ala_ligase_MurC"/>
</dbReference>
<dbReference type="NCBIfam" id="TIGR01082">
    <property type="entry name" value="murC"/>
    <property type="match status" value="1"/>
</dbReference>
<dbReference type="PANTHER" id="PTHR43445:SF3">
    <property type="entry name" value="UDP-N-ACETYLMURAMATE--L-ALANINE LIGASE"/>
    <property type="match status" value="1"/>
</dbReference>
<dbReference type="PANTHER" id="PTHR43445">
    <property type="entry name" value="UDP-N-ACETYLMURAMATE--L-ALANINE LIGASE-RELATED"/>
    <property type="match status" value="1"/>
</dbReference>
<dbReference type="Pfam" id="PF01225">
    <property type="entry name" value="Mur_ligase"/>
    <property type="match status" value="1"/>
</dbReference>
<dbReference type="Pfam" id="PF02875">
    <property type="entry name" value="Mur_ligase_C"/>
    <property type="match status" value="1"/>
</dbReference>
<dbReference type="Pfam" id="PF08245">
    <property type="entry name" value="Mur_ligase_M"/>
    <property type="match status" value="1"/>
</dbReference>
<dbReference type="SUPFAM" id="SSF51984">
    <property type="entry name" value="MurCD N-terminal domain"/>
    <property type="match status" value="1"/>
</dbReference>
<dbReference type="SUPFAM" id="SSF53623">
    <property type="entry name" value="MurD-like peptide ligases, catalytic domain"/>
    <property type="match status" value="1"/>
</dbReference>
<dbReference type="SUPFAM" id="SSF53244">
    <property type="entry name" value="MurD-like peptide ligases, peptide-binding domain"/>
    <property type="match status" value="1"/>
</dbReference>
<reference key="1">
    <citation type="journal article" date="2010" name="BMC Genomics">
        <title>A genomic perspective on the potential of Actinobacillus succinogenes for industrial succinate production.</title>
        <authorList>
            <person name="McKinlay J.B."/>
            <person name="Laivenieks M."/>
            <person name="Schindler B.D."/>
            <person name="McKinlay A.A."/>
            <person name="Siddaramappa S."/>
            <person name="Challacombe J.F."/>
            <person name="Lowry S.R."/>
            <person name="Clum A."/>
            <person name="Lapidus A.L."/>
            <person name="Burkhart K.B."/>
            <person name="Harkins V."/>
            <person name="Vieille C."/>
        </authorList>
    </citation>
    <scope>NUCLEOTIDE SEQUENCE [LARGE SCALE GENOMIC DNA]</scope>
    <source>
        <strain>ATCC 55618 / DSM 22257 / CCUG 43843 / 130Z</strain>
    </source>
</reference>
<proteinExistence type="inferred from homology"/>
<evidence type="ECO:0000255" key="1">
    <source>
        <dbReference type="HAMAP-Rule" id="MF_00046"/>
    </source>
</evidence>
<sequence length="476" mass="52030">MKKRQDKIRQMVPSMRRVHQIHFVGIGGAGMGGIAEVLLNEGYDITGSDIAENAVTGRLSSLGGKIFIGHAATNVENASVVVVSSAIKPDNVEVVAAHEKRIPVIQRAQMLAELMRFRHGIAIAGTHGKTTTTAMISMIYTQAGLDPTFVNGGLVKSAGTNAYLGASRYLIAEADESDASFLHLQPMVSVVTNIEPDHMDTYHGDFDEMKRTYVNFLHNLPFYGLAVMCADDAVLMELVPQVGRQVITYGFSEKADYRIENYEQTGFQGHYDVITPAGERIHILLNVPGKHNALNATAALVVAKEEGIGNDAILAALADFQGAGRRFDQLGEFIRPNGKVMLVDDYGHHPTEVGVTIQAARSGWENRRVVMVFQPHRYSRTRDLFDDFVRVLSQVDVLILLDVYPAGEQPIAGADSRSLARSIRNLGKVDPIFVADHGQLPEVVDQIIQDGDLILAQGAGNVSRLSRNLVEHWTKA</sequence>